<dbReference type="EC" id="5.4.99.12" evidence="1"/>
<dbReference type="EMBL" id="CP000803">
    <property type="protein sequence ID" value="ABU61603.1"/>
    <property type="molecule type" value="Genomic_DNA"/>
</dbReference>
<dbReference type="RefSeq" id="WP_010031588.1">
    <property type="nucleotide sequence ID" value="NC_009749.1"/>
</dbReference>
<dbReference type="SMR" id="A7NCA0"/>
<dbReference type="KEGG" id="fta:FTA_1127"/>
<dbReference type="HOGENOM" id="CLU_014673_0_2_6"/>
<dbReference type="GO" id="GO:0003723">
    <property type="term" value="F:RNA binding"/>
    <property type="evidence" value="ECO:0007669"/>
    <property type="project" value="InterPro"/>
</dbReference>
<dbReference type="GO" id="GO:0160147">
    <property type="term" value="F:tRNA pseudouridine(38-40) synthase activity"/>
    <property type="evidence" value="ECO:0007669"/>
    <property type="project" value="UniProtKB-EC"/>
</dbReference>
<dbReference type="GO" id="GO:0031119">
    <property type="term" value="P:tRNA pseudouridine synthesis"/>
    <property type="evidence" value="ECO:0007669"/>
    <property type="project" value="UniProtKB-UniRule"/>
</dbReference>
<dbReference type="CDD" id="cd02570">
    <property type="entry name" value="PseudoU_synth_EcTruA"/>
    <property type="match status" value="1"/>
</dbReference>
<dbReference type="FunFam" id="3.30.70.580:FF:000001">
    <property type="entry name" value="tRNA pseudouridine synthase A"/>
    <property type="match status" value="1"/>
</dbReference>
<dbReference type="Gene3D" id="3.30.70.660">
    <property type="entry name" value="Pseudouridine synthase I, catalytic domain, C-terminal subdomain"/>
    <property type="match status" value="1"/>
</dbReference>
<dbReference type="Gene3D" id="3.30.70.580">
    <property type="entry name" value="Pseudouridine synthase I, catalytic domain, N-terminal subdomain"/>
    <property type="match status" value="1"/>
</dbReference>
<dbReference type="HAMAP" id="MF_00171">
    <property type="entry name" value="TruA"/>
    <property type="match status" value="1"/>
</dbReference>
<dbReference type="InterPro" id="IPR020103">
    <property type="entry name" value="PsdUridine_synth_cat_dom_sf"/>
</dbReference>
<dbReference type="InterPro" id="IPR001406">
    <property type="entry name" value="PsdUridine_synth_TruA"/>
</dbReference>
<dbReference type="InterPro" id="IPR020097">
    <property type="entry name" value="PsdUridine_synth_TruA_a/b_dom"/>
</dbReference>
<dbReference type="InterPro" id="IPR020095">
    <property type="entry name" value="PsdUridine_synth_TruA_C"/>
</dbReference>
<dbReference type="InterPro" id="IPR020094">
    <property type="entry name" value="TruA/RsuA/RluB/E/F_N"/>
</dbReference>
<dbReference type="NCBIfam" id="TIGR00071">
    <property type="entry name" value="hisT_truA"/>
    <property type="match status" value="1"/>
</dbReference>
<dbReference type="PANTHER" id="PTHR11142">
    <property type="entry name" value="PSEUDOURIDYLATE SYNTHASE"/>
    <property type="match status" value="1"/>
</dbReference>
<dbReference type="PANTHER" id="PTHR11142:SF0">
    <property type="entry name" value="TRNA PSEUDOURIDINE SYNTHASE-LIKE 1"/>
    <property type="match status" value="1"/>
</dbReference>
<dbReference type="Pfam" id="PF01416">
    <property type="entry name" value="PseudoU_synth_1"/>
    <property type="match status" value="2"/>
</dbReference>
<dbReference type="PIRSF" id="PIRSF001430">
    <property type="entry name" value="tRNA_psdUrid_synth"/>
    <property type="match status" value="1"/>
</dbReference>
<dbReference type="SUPFAM" id="SSF55120">
    <property type="entry name" value="Pseudouridine synthase"/>
    <property type="match status" value="1"/>
</dbReference>
<gene>
    <name evidence="1" type="primary">truA</name>
    <name type="ordered locus">FTA_1127</name>
</gene>
<reference key="1">
    <citation type="journal article" date="2009" name="PLoS ONE">
        <title>Complete genome sequence of Francisella tularensis subspecies holarctica FTNF002-00.</title>
        <authorList>
            <person name="Barabote R.D."/>
            <person name="Xie G."/>
            <person name="Brettin T.S."/>
            <person name="Hinrichs S.H."/>
            <person name="Fey P.D."/>
            <person name="Jay J.J."/>
            <person name="Engle J.L."/>
            <person name="Godbole S.D."/>
            <person name="Noronha J.M."/>
            <person name="Scheuermann R.H."/>
            <person name="Zhou L.W."/>
            <person name="Lion C."/>
            <person name="Dempsey M.P."/>
        </authorList>
    </citation>
    <scope>NUCLEOTIDE SEQUENCE [LARGE SCALE GENOMIC DNA]</scope>
    <source>
        <strain>FTNF002-00 / FTA</strain>
    </source>
</reference>
<protein>
    <recommendedName>
        <fullName evidence="1">tRNA pseudouridine synthase A</fullName>
        <ecNumber evidence="1">5.4.99.12</ecNumber>
    </recommendedName>
    <alternativeName>
        <fullName evidence="1">tRNA pseudouridine(38-40) synthase</fullName>
    </alternativeName>
    <alternativeName>
        <fullName evidence="1">tRNA pseudouridylate synthase I</fullName>
    </alternativeName>
    <alternativeName>
        <fullName evidence="1">tRNA-uridine isomerase I</fullName>
    </alternativeName>
</protein>
<proteinExistence type="inferred from homology"/>
<comment type="function">
    <text evidence="1">Formation of pseudouridine at positions 38, 39 and 40 in the anticodon stem and loop of transfer RNAs.</text>
</comment>
<comment type="catalytic activity">
    <reaction evidence="1">
        <text>uridine(38/39/40) in tRNA = pseudouridine(38/39/40) in tRNA</text>
        <dbReference type="Rhea" id="RHEA:22376"/>
        <dbReference type="Rhea" id="RHEA-COMP:10085"/>
        <dbReference type="Rhea" id="RHEA-COMP:10087"/>
        <dbReference type="ChEBI" id="CHEBI:65314"/>
        <dbReference type="ChEBI" id="CHEBI:65315"/>
        <dbReference type="EC" id="5.4.99.12"/>
    </reaction>
</comment>
<comment type="subunit">
    <text evidence="1">Homodimer.</text>
</comment>
<comment type="similarity">
    <text evidence="1">Belongs to the tRNA pseudouridine synthase TruA family.</text>
</comment>
<sequence length="258" mass="29594">MKNYLLQIEYFGKNYCGWQRQSHSLSVQEELEKALSKIANQNIEVTCAGRTDTGVHATSQIVNFYSNAYRPLSAWQRGVNALLPQDIKILAVQQVNNNFNSRFTAINRTYNYIIYNSATSSPIFAEHCLWENRELDIDKMNQACEYLLGEQDFSSFRSSQCQSNTPFRNIQKAEFIKQGSFIVFEVVGNAFLHHMIRNLVGSLLKVGLGFESPEWIKVVLEAKDRTQAAETAKAHGLYFVGVEYPEFSFKRQIIKLFC</sequence>
<keyword id="KW-0413">Isomerase</keyword>
<keyword id="KW-0819">tRNA processing</keyword>
<organism>
    <name type="scientific">Francisella tularensis subsp. holarctica (strain FTNF002-00 / FTA)</name>
    <dbReference type="NCBI Taxonomy" id="458234"/>
    <lineage>
        <taxon>Bacteria</taxon>
        <taxon>Pseudomonadati</taxon>
        <taxon>Pseudomonadota</taxon>
        <taxon>Gammaproteobacteria</taxon>
        <taxon>Thiotrichales</taxon>
        <taxon>Francisellaceae</taxon>
        <taxon>Francisella</taxon>
    </lineage>
</organism>
<name>TRUA_FRATF</name>
<evidence type="ECO:0000255" key="1">
    <source>
        <dbReference type="HAMAP-Rule" id="MF_00171"/>
    </source>
</evidence>
<feature type="chain" id="PRO_1000017083" description="tRNA pseudouridine synthase A">
    <location>
        <begin position="1"/>
        <end position="258"/>
    </location>
</feature>
<feature type="active site" description="Nucleophile" evidence="1">
    <location>
        <position position="52"/>
    </location>
</feature>
<feature type="binding site" evidence="1">
    <location>
        <position position="110"/>
    </location>
    <ligand>
        <name>substrate</name>
    </ligand>
</feature>
<accession>A7NCA0</accession>